<reference key="1">
    <citation type="journal article" date="1997" name="J. Bacteriol.">
        <title>Complete genome sequence of Methanobacterium thermoautotrophicum deltaH: functional analysis and comparative genomics.</title>
        <authorList>
            <person name="Smith D.R."/>
            <person name="Doucette-Stamm L.A."/>
            <person name="Deloughery C."/>
            <person name="Lee H.-M."/>
            <person name="Dubois J."/>
            <person name="Aldredge T."/>
            <person name="Bashirzadeh R."/>
            <person name="Blakely D."/>
            <person name="Cook R."/>
            <person name="Gilbert K."/>
            <person name="Harrison D."/>
            <person name="Hoang L."/>
            <person name="Keagle P."/>
            <person name="Lumm W."/>
            <person name="Pothier B."/>
            <person name="Qiu D."/>
            <person name="Spadafora R."/>
            <person name="Vicare R."/>
            <person name="Wang Y."/>
            <person name="Wierzbowski J."/>
            <person name="Gibson R."/>
            <person name="Jiwani N."/>
            <person name="Caruso A."/>
            <person name="Bush D."/>
            <person name="Safer H."/>
            <person name="Patwell D."/>
            <person name="Prabhakar S."/>
            <person name="McDougall S."/>
            <person name="Shimer G."/>
            <person name="Goyal A."/>
            <person name="Pietrovski S."/>
            <person name="Church G.M."/>
            <person name="Daniels C.J."/>
            <person name="Mao J.-I."/>
            <person name="Rice P."/>
            <person name="Noelling J."/>
            <person name="Reeve J.N."/>
        </authorList>
    </citation>
    <scope>NUCLEOTIDE SEQUENCE [LARGE SCALE GENOMIC DNA]</scope>
    <source>
        <strain>ATCC 29096 / DSM 1053 / JCM 10044 / NBRC 100330 / Delta H</strain>
    </source>
</reference>
<reference key="2">
    <citation type="journal article" date="2000" name="Nat. Struct. Biol.">
        <title>Structural proteomics of an archaeon.</title>
        <authorList>
            <person name="Christendat D."/>
            <person name="Yee A."/>
            <person name="Dharamsi A."/>
            <person name="Kluger Y."/>
            <person name="Savchenko A."/>
            <person name="Cort J.R."/>
            <person name="Booth V."/>
            <person name="Mackereth C.D."/>
            <person name="Saridakis V."/>
            <person name="Ekiel I."/>
            <person name="Kozlov G."/>
            <person name="Maxwell K.L."/>
            <person name="Wu N."/>
            <person name="McIntosh L.P."/>
            <person name="Gehring K."/>
            <person name="Kennedy M.A."/>
            <person name="Davidson A.R."/>
            <person name="Pai E.F."/>
            <person name="Gerstein M."/>
            <person name="Edwards A.M."/>
            <person name="Arrowsmith C.H."/>
        </authorList>
    </citation>
    <scope>STRUCTURE BY NMR</scope>
</reference>
<sequence length="71" mass="8326">MYIIFRCDCGRALYSREGAKTRKCVCGRTVNVKDRRIFGRADDFEEASELVRKLQEEKYGSCHFTNPSKRE</sequence>
<keyword id="KW-0002">3D-structure</keyword>
<keyword id="KW-1185">Reference proteome</keyword>
<name>PA84_METTH</name>
<proteinExistence type="evidence at protein level"/>
<organism>
    <name type="scientific">Methanothermobacter thermautotrophicus (strain ATCC 29096 / DSM 1053 / JCM 10044 / NBRC 100330 / Delta H)</name>
    <name type="common">Methanobacterium thermoautotrophicum</name>
    <dbReference type="NCBI Taxonomy" id="187420"/>
    <lineage>
        <taxon>Archaea</taxon>
        <taxon>Methanobacteriati</taxon>
        <taxon>Methanobacteriota</taxon>
        <taxon>Methanomada group</taxon>
        <taxon>Methanobacteria</taxon>
        <taxon>Methanobacteriales</taxon>
        <taxon>Methanobacteriaceae</taxon>
        <taxon>Methanothermobacter</taxon>
    </lineage>
</organism>
<gene>
    <name type="ordered locus">MTH_1184</name>
</gene>
<dbReference type="EMBL" id="AE000666">
    <property type="protein sequence ID" value="AAB85673.1"/>
    <property type="molecule type" value="Genomic_DNA"/>
</dbReference>
<dbReference type="PIR" id="H69024">
    <property type="entry name" value="H69024"/>
</dbReference>
<dbReference type="RefSeq" id="WP_010876808.1">
    <property type="nucleotide sequence ID" value="NC_000916.1"/>
</dbReference>
<dbReference type="PDB" id="1GH9">
    <property type="method" value="NMR"/>
    <property type="chains" value="A=1-71"/>
</dbReference>
<dbReference type="PDBsum" id="1GH9"/>
<dbReference type="BMRB" id="O27252"/>
<dbReference type="SMR" id="O27252"/>
<dbReference type="STRING" id="187420.MTH_1184"/>
<dbReference type="PaxDb" id="187420-MTH_1184"/>
<dbReference type="EnsemblBacteria" id="AAB85673">
    <property type="protein sequence ID" value="AAB85673"/>
    <property type="gene ID" value="MTH_1184"/>
</dbReference>
<dbReference type="GeneID" id="1471592"/>
<dbReference type="KEGG" id="mth:MTH_1184"/>
<dbReference type="PATRIC" id="fig|187420.15.peg.1162"/>
<dbReference type="HOGENOM" id="CLU_187355_0_0_2"/>
<dbReference type="InParanoid" id="O27252"/>
<dbReference type="EvolutionaryTrace" id="O27252"/>
<dbReference type="Proteomes" id="UP000005223">
    <property type="component" value="Chromosome"/>
</dbReference>
<dbReference type="Gene3D" id="3.90.820.10">
    <property type="entry name" value="Structural Genomics, Unknown Function 30-nov-00 1gh9 Mol_id"/>
    <property type="match status" value="1"/>
</dbReference>
<dbReference type="InterPro" id="IPR015166">
    <property type="entry name" value="DUF1922"/>
</dbReference>
<dbReference type="InterPro" id="IPR036304">
    <property type="entry name" value="MTH1184"/>
</dbReference>
<dbReference type="Pfam" id="PF09082">
    <property type="entry name" value="DUF1922"/>
    <property type="match status" value="1"/>
</dbReference>
<dbReference type="SUPFAM" id="SSF57821">
    <property type="entry name" value="Hypothetical protein MTH1184"/>
    <property type="match status" value="1"/>
</dbReference>
<accession>O27252</accession>
<feature type="chain" id="PRO_0000138638" description="Protein MTH_1184">
    <location>
        <begin position="1"/>
        <end position="71"/>
    </location>
</feature>
<feature type="strand" evidence="1">
    <location>
        <begin position="2"/>
        <end position="7"/>
    </location>
</feature>
<feature type="strand" evidence="1">
    <location>
        <begin position="13"/>
        <end position="16"/>
    </location>
</feature>
<feature type="strand" evidence="1">
    <location>
        <begin position="20"/>
        <end position="24"/>
    </location>
</feature>
<feature type="turn" evidence="1">
    <location>
        <begin position="25"/>
        <end position="27"/>
    </location>
</feature>
<feature type="strand" evidence="1">
    <location>
        <begin position="28"/>
        <end position="31"/>
    </location>
</feature>
<feature type="strand" evidence="1">
    <location>
        <begin position="34"/>
        <end position="36"/>
    </location>
</feature>
<feature type="helix" evidence="1">
    <location>
        <begin position="44"/>
        <end position="54"/>
    </location>
</feature>
<evidence type="ECO:0007829" key="1">
    <source>
        <dbReference type="PDB" id="1GH9"/>
    </source>
</evidence>
<protein>
    <recommendedName>
        <fullName>Protein MTH_1184</fullName>
    </recommendedName>
</protein>